<keyword id="KW-1185">Reference proteome</keyword>
<keyword id="KW-0677">Repeat</keyword>
<organism>
    <name type="scientific">Arabidopsis thaliana</name>
    <name type="common">Mouse-ear cress</name>
    <dbReference type="NCBI Taxonomy" id="3702"/>
    <lineage>
        <taxon>Eukaryota</taxon>
        <taxon>Viridiplantae</taxon>
        <taxon>Streptophyta</taxon>
        <taxon>Embryophyta</taxon>
        <taxon>Tracheophyta</taxon>
        <taxon>Spermatophyta</taxon>
        <taxon>Magnoliopsida</taxon>
        <taxon>eudicotyledons</taxon>
        <taxon>Gunneridae</taxon>
        <taxon>Pentapetalae</taxon>
        <taxon>rosids</taxon>
        <taxon>malvids</taxon>
        <taxon>Brassicales</taxon>
        <taxon>Brassicaceae</taxon>
        <taxon>Camelineae</taxon>
        <taxon>Arabidopsis</taxon>
    </lineage>
</organism>
<reference key="1">
    <citation type="journal article" date="2000" name="DNA Res.">
        <title>Structural analysis of Arabidopsis thaliana chromosome 3. I. Sequence features of the regions of 4,504,864 bp covered by sixty P1 and TAC clones.</title>
        <authorList>
            <person name="Sato S."/>
            <person name="Nakamura Y."/>
            <person name="Kaneko T."/>
            <person name="Katoh T."/>
            <person name="Asamizu E."/>
            <person name="Tabata S."/>
        </authorList>
    </citation>
    <scope>NUCLEOTIDE SEQUENCE [LARGE SCALE GENOMIC DNA]</scope>
    <source>
        <strain>cv. Columbia</strain>
    </source>
</reference>
<reference key="2">
    <citation type="journal article" date="2017" name="Plant J.">
        <title>Araport11: a complete reannotation of the Arabidopsis thaliana reference genome.</title>
        <authorList>
            <person name="Cheng C.Y."/>
            <person name="Krishnakumar V."/>
            <person name="Chan A.P."/>
            <person name="Thibaud-Nissen F."/>
            <person name="Schobel S."/>
            <person name="Town C.D."/>
        </authorList>
    </citation>
    <scope>GENOME REANNOTATION</scope>
    <source>
        <strain>cv. Columbia</strain>
    </source>
</reference>
<reference key="3">
    <citation type="submission" date="2004-09" db="EMBL/GenBank/DDBJ databases">
        <title>Large-scale analysis of RIKEN Arabidopsis full-length (RAFL) cDNAs.</title>
        <authorList>
            <person name="Totoki Y."/>
            <person name="Seki M."/>
            <person name="Ishida J."/>
            <person name="Nakajima M."/>
            <person name="Enju A."/>
            <person name="Kamiya A."/>
            <person name="Narusaka M."/>
            <person name="Shin-i T."/>
            <person name="Nakagawa M."/>
            <person name="Sakamoto N."/>
            <person name="Oishi K."/>
            <person name="Kohara Y."/>
            <person name="Kobayashi M."/>
            <person name="Toyoda A."/>
            <person name="Sakaki Y."/>
            <person name="Sakurai T."/>
            <person name="Iida K."/>
            <person name="Akiyama K."/>
            <person name="Satou M."/>
            <person name="Toyoda T."/>
            <person name="Konagaya A."/>
            <person name="Carninci P."/>
            <person name="Kawai J."/>
            <person name="Hayashizaki Y."/>
            <person name="Shinozaki K."/>
        </authorList>
    </citation>
    <scope>NUCLEOTIDE SEQUENCE [LARGE SCALE MRNA]</scope>
    <source>
        <strain>cv. Columbia</strain>
    </source>
</reference>
<reference key="4">
    <citation type="submission" date="2003-11" db="EMBL/GenBank/DDBJ databases">
        <title>Arabidopsis cDNA clones.</title>
        <authorList>
            <person name="Cheuk R.F."/>
            <person name="Chen H."/>
            <person name="Kim C.J."/>
            <person name="Shinn P."/>
            <person name="Carninci P."/>
            <person name="Hayashizaki Y."/>
            <person name="Ishida J."/>
            <person name="Kamiya A."/>
            <person name="Kawai J."/>
            <person name="Narusaka M."/>
            <person name="Sakurai T."/>
            <person name="Satou M."/>
            <person name="Seki M."/>
            <person name="Shinozaki K."/>
            <person name="Ecker J.R."/>
        </authorList>
    </citation>
    <scope>NUCLEOTIDE SEQUENCE [LARGE SCALE MRNA] OF 2-565</scope>
    <source>
        <strain>cv. Columbia</strain>
    </source>
</reference>
<reference key="5">
    <citation type="journal article" date="2004" name="Plant Cell">
        <title>Genome-wide analysis of Arabidopsis pentatricopeptide repeat proteins reveals their essential role in organelle biogenesis.</title>
        <authorList>
            <person name="Lurin C."/>
            <person name="Andres C."/>
            <person name="Aubourg S."/>
            <person name="Bellaoui M."/>
            <person name="Bitton F."/>
            <person name="Bruyere C."/>
            <person name="Caboche M."/>
            <person name="Debast C."/>
            <person name="Gualberto J."/>
            <person name="Hoffmann B."/>
            <person name="Lecharny A."/>
            <person name="Le Ret M."/>
            <person name="Martin-Magniette M.-L."/>
            <person name="Mireau H."/>
            <person name="Peeters N."/>
            <person name="Renou J.-P."/>
            <person name="Szurek B."/>
            <person name="Taconnat L."/>
            <person name="Small I."/>
        </authorList>
    </citation>
    <scope>GENE FAMILY</scope>
</reference>
<sequence length="565" mass="63115">MMLVVSENYLLSPSLYLKALKLCSYQNVKKQLLLIHGNSITNGFCSNLQLKDMLIDLYLKQGDVKHARKLFDRISKRDVVSWTAMISRFSRCGYHPDALLLFKEMHREDVKANQFTYGSVLKSCKDLGCLKEGMQIHGSVEKGNCAGNLIVRSALLSLYARCGKMEEARLQFDSMKERDLVSWNAMIDGYTANACADTSFSLFQLMLTEGKKPDCFTFGSLLRASIVVKCLEIVSELHGLAIKLGFGRSSALIRSLVNAYVKCGSLANAWKLHEGTKKRDLLSCTALITGFSQQNNCTSDAFDIFKDMIRMKTKMDEVVVSSMLKICTTIASVTIGRQIHGFALKSSQIRFDVALGNSLIDMYAKSGEIEDAVLAFEEMKEKDVRSWTSLIAGYGRHGNFEKAIDLYNRMEHERIKPNDVTFLSLLSACSHTGQTELGWKIYDTMINKHGIEAREEHLSCIIDMLARSGYLEEAYALIRSKEGIVSLSSSTWGAFLDACRRHGNVQLSKVAATQLLSMEPRKPVNYINLASVYAANGAWDNALNTRKLMKESGSCNKAPGYSLVY</sequence>
<accession>Q9LT48</accession>
<accession>F4JES8</accession>
<accession>Q6NPS2</accession>
<proteinExistence type="evidence at transcript level"/>
<gene>
    <name type="primary">PCMP-E94</name>
    <name type="ordered locus">At3g20730</name>
    <name type="ORF">MOE17.3</name>
</gene>
<feature type="chain" id="PRO_0000356103" description="Pentatricopeptide repeat-containing protein At3g20730">
    <location>
        <begin position="1"/>
        <end position="565"/>
    </location>
</feature>
<feature type="repeat" description="PPR 1">
    <location>
        <begin position="12"/>
        <end position="46"/>
    </location>
</feature>
<feature type="repeat" description="PPR 2">
    <location>
        <begin position="47"/>
        <end position="77"/>
    </location>
</feature>
<feature type="repeat" description="PPR 3">
    <location>
        <begin position="78"/>
        <end position="112"/>
    </location>
</feature>
<feature type="repeat" description="PPR 4">
    <location>
        <begin position="113"/>
        <end position="147"/>
    </location>
</feature>
<feature type="repeat" description="PPR 5">
    <location>
        <begin position="148"/>
        <end position="178"/>
    </location>
</feature>
<feature type="repeat" description="PPR 6">
    <location>
        <begin position="179"/>
        <end position="213"/>
    </location>
</feature>
<feature type="repeat" description="PPR 7">
    <location>
        <begin position="214"/>
        <end position="248"/>
    </location>
</feature>
<feature type="repeat" description="PPR 8">
    <location>
        <begin position="249"/>
        <end position="279"/>
    </location>
</feature>
<feature type="repeat" description="PPR 9">
    <location>
        <begin position="280"/>
        <end position="315"/>
    </location>
</feature>
<feature type="repeat" description="PPR 10">
    <location>
        <begin position="316"/>
        <end position="351"/>
    </location>
</feature>
<feature type="repeat" description="PPR 11">
    <location>
        <begin position="352"/>
        <end position="382"/>
    </location>
</feature>
<feature type="repeat" description="PPR 12">
    <location>
        <begin position="383"/>
        <end position="417"/>
    </location>
</feature>
<feature type="repeat" description="PPR 13">
    <location>
        <begin position="418"/>
        <end position="448"/>
    </location>
</feature>
<feature type="repeat" description="PPR 14">
    <location>
        <begin position="454"/>
        <end position="484"/>
    </location>
</feature>
<feature type="region of interest" description="Type E motif; degenerate">
    <location>
        <begin position="491"/>
        <end position="565"/>
    </location>
</feature>
<dbReference type="EMBL" id="AB025629">
    <property type="protein sequence ID" value="BAB02480.1"/>
    <property type="molecule type" value="Genomic_DNA"/>
</dbReference>
<dbReference type="EMBL" id="CP002686">
    <property type="protein sequence ID" value="AEE76417.2"/>
    <property type="molecule type" value="Genomic_DNA"/>
</dbReference>
<dbReference type="EMBL" id="AK176813">
    <property type="protein sequence ID" value="BAD44576.1"/>
    <property type="molecule type" value="mRNA"/>
</dbReference>
<dbReference type="EMBL" id="BT010745">
    <property type="protein sequence ID" value="AAR23715.1"/>
    <property type="molecule type" value="mRNA"/>
</dbReference>
<dbReference type="RefSeq" id="NP_188709.2">
    <property type="nucleotide sequence ID" value="NM_112964.2"/>
</dbReference>
<dbReference type="SMR" id="Q9LT48"/>
<dbReference type="FunCoup" id="Q9LT48">
    <property type="interactions" value="14"/>
</dbReference>
<dbReference type="STRING" id="3702.Q9LT48"/>
<dbReference type="iPTMnet" id="Q9LT48"/>
<dbReference type="PaxDb" id="3702-AT3G20730.1"/>
<dbReference type="EnsemblPlants" id="AT3G20730.1">
    <property type="protein sequence ID" value="AT3G20730.1"/>
    <property type="gene ID" value="AT3G20730"/>
</dbReference>
<dbReference type="GeneID" id="821621"/>
<dbReference type="Gramene" id="AT3G20730.1">
    <property type="protein sequence ID" value="AT3G20730.1"/>
    <property type="gene ID" value="AT3G20730"/>
</dbReference>
<dbReference type="KEGG" id="ath:AT3G20730"/>
<dbReference type="Araport" id="AT3G20730"/>
<dbReference type="TAIR" id="AT3G20730"/>
<dbReference type="eggNOG" id="KOG4197">
    <property type="taxonomic scope" value="Eukaryota"/>
</dbReference>
<dbReference type="HOGENOM" id="CLU_002706_0_1_1"/>
<dbReference type="InParanoid" id="Q9LT48"/>
<dbReference type="OMA" id="ESYDLIC"/>
<dbReference type="PhylomeDB" id="Q9LT48"/>
<dbReference type="PRO" id="PR:Q9LT48"/>
<dbReference type="Proteomes" id="UP000006548">
    <property type="component" value="Chromosome 3"/>
</dbReference>
<dbReference type="ExpressionAtlas" id="Q9LT48">
    <property type="expression patterns" value="baseline and differential"/>
</dbReference>
<dbReference type="GO" id="GO:0003723">
    <property type="term" value="F:RNA binding"/>
    <property type="evidence" value="ECO:0007669"/>
    <property type="project" value="InterPro"/>
</dbReference>
<dbReference type="GO" id="GO:0009451">
    <property type="term" value="P:RNA modification"/>
    <property type="evidence" value="ECO:0007669"/>
    <property type="project" value="InterPro"/>
</dbReference>
<dbReference type="FunFam" id="1.25.40.10:FF:000381">
    <property type="entry name" value="Pentatricopeptide repeat-containing protein"/>
    <property type="match status" value="1"/>
</dbReference>
<dbReference type="FunFam" id="1.25.40.10:FF:000227">
    <property type="entry name" value="Pentatricopeptide repeat-containing protein At3g13880"/>
    <property type="match status" value="1"/>
</dbReference>
<dbReference type="FunFam" id="1.25.40.10:FF:000090">
    <property type="entry name" value="Pentatricopeptide repeat-containing protein, chloroplastic"/>
    <property type="match status" value="1"/>
</dbReference>
<dbReference type="Gene3D" id="1.25.40.10">
    <property type="entry name" value="Tetratricopeptide repeat domain"/>
    <property type="match status" value="5"/>
</dbReference>
<dbReference type="InterPro" id="IPR046848">
    <property type="entry name" value="E_motif"/>
</dbReference>
<dbReference type="InterPro" id="IPR002885">
    <property type="entry name" value="Pentatricopeptide_rpt"/>
</dbReference>
<dbReference type="InterPro" id="IPR046960">
    <property type="entry name" value="PPR_At4g14850-like_plant"/>
</dbReference>
<dbReference type="InterPro" id="IPR011990">
    <property type="entry name" value="TPR-like_helical_dom_sf"/>
</dbReference>
<dbReference type="NCBIfam" id="TIGR00756">
    <property type="entry name" value="PPR"/>
    <property type="match status" value="5"/>
</dbReference>
<dbReference type="PANTHER" id="PTHR47926">
    <property type="entry name" value="PENTATRICOPEPTIDE REPEAT-CONTAINING PROTEIN"/>
    <property type="match status" value="1"/>
</dbReference>
<dbReference type="PANTHER" id="PTHR47926:SF477">
    <property type="entry name" value="PENTATRICOPEPTIDE REPEAT-CONTAINING PROTEIN"/>
    <property type="match status" value="1"/>
</dbReference>
<dbReference type="Pfam" id="PF20431">
    <property type="entry name" value="E_motif"/>
    <property type="match status" value="1"/>
</dbReference>
<dbReference type="Pfam" id="PF13041">
    <property type="entry name" value="PPR_2"/>
    <property type="match status" value="3"/>
</dbReference>
<dbReference type="SUPFAM" id="SSF48452">
    <property type="entry name" value="TPR-like"/>
    <property type="match status" value="1"/>
</dbReference>
<dbReference type="PROSITE" id="PS51375">
    <property type="entry name" value="PPR"/>
    <property type="match status" value="13"/>
</dbReference>
<name>PP244_ARATH</name>
<comment type="similarity">
    <text evidence="1">Belongs to the PPR family. PCMP-E subfamily.</text>
</comment>
<comment type="online information" name="Pentatricopeptide repeat proteins">
    <link uri="https://ppr.plantenergy.uwa.edu.au"/>
</comment>
<evidence type="ECO:0000305" key="1"/>
<protein>
    <recommendedName>
        <fullName>Pentatricopeptide repeat-containing protein At3g20730</fullName>
    </recommendedName>
</protein>